<accession>A5F4K5</accession>
<accession>C3M294</accession>
<reference key="1">
    <citation type="submission" date="2007-03" db="EMBL/GenBank/DDBJ databases">
        <authorList>
            <person name="Heidelberg J."/>
        </authorList>
    </citation>
    <scope>NUCLEOTIDE SEQUENCE [LARGE SCALE GENOMIC DNA]</scope>
    <source>
        <strain>ATCC 39541 / Classical Ogawa 395 / O395</strain>
    </source>
</reference>
<reference key="2">
    <citation type="journal article" date="2008" name="PLoS ONE">
        <title>A recalibrated molecular clock and independent origins for the cholera pandemic clones.</title>
        <authorList>
            <person name="Feng L."/>
            <person name="Reeves P.R."/>
            <person name="Lan R."/>
            <person name="Ren Y."/>
            <person name="Gao C."/>
            <person name="Zhou Z."/>
            <person name="Ren Y."/>
            <person name="Cheng J."/>
            <person name="Wang W."/>
            <person name="Wang J."/>
            <person name="Qian W."/>
            <person name="Li D."/>
            <person name="Wang L."/>
        </authorList>
    </citation>
    <scope>NUCLEOTIDE SEQUENCE [LARGE SCALE GENOMIC DNA]</scope>
    <source>
        <strain>ATCC 39541 / Classical Ogawa 395 / O395</strain>
    </source>
</reference>
<dbReference type="EC" id="1.6.1.1" evidence="1"/>
<dbReference type="EMBL" id="CP000627">
    <property type="protein sequence ID" value="ABQ21088.1"/>
    <property type="molecule type" value="Genomic_DNA"/>
</dbReference>
<dbReference type="EMBL" id="CP001235">
    <property type="protein sequence ID" value="ACP08058.1"/>
    <property type="molecule type" value="Genomic_DNA"/>
</dbReference>
<dbReference type="RefSeq" id="WP_000529898.1">
    <property type="nucleotide sequence ID" value="NZ_JAACZH010000014.1"/>
</dbReference>
<dbReference type="SMR" id="A5F4K5"/>
<dbReference type="KEGG" id="vco:VC0395_A2370"/>
<dbReference type="KEGG" id="vcr:VC395_0029"/>
<dbReference type="PATRIC" id="fig|345073.21.peg.30"/>
<dbReference type="eggNOG" id="COG1249">
    <property type="taxonomic scope" value="Bacteria"/>
</dbReference>
<dbReference type="HOGENOM" id="CLU_016755_0_0_6"/>
<dbReference type="OrthoDB" id="9800167at2"/>
<dbReference type="Proteomes" id="UP000000249">
    <property type="component" value="Chromosome 2"/>
</dbReference>
<dbReference type="GO" id="GO:0005829">
    <property type="term" value="C:cytosol"/>
    <property type="evidence" value="ECO:0007669"/>
    <property type="project" value="TreeGrafter"/>
</dbReference>
<dbReference type="GO" id="GO:0004148">
    <property type="term" value="F:dihydrolipoyl dehydrogenase (NADH) activity"/>
    <property type="evidence" value="ECO:0007669"/>
    <property type="project" value="TreeGrafter"/>
</dbReference>
<dbReference type="GO" id="GO:0050660">
    <property type="term" value="F:flavin adenine dinucleotide binding"/>
    <property type="evidence" value="ECO:0007669"/>
    <property type="project" value="TreeGrafter"/>
</dbReference>
<dbReference type="GO" id="GO:0003957">
    <property type="term" value="F:NAD(P)+ transhydrogenase (Si-specific) activity"/>
    <property type="evidence" value="ECO:0007669"/>
    <property type="project" value="UniProtKB-UniRule"/>
</dbReference>
<dbReference type="GO" id="GO:0006103">
    <property type="term" value="P:2-oxoglutarate metabolic process"/>
    <property type="evidence" value="ECO:0007669"/>
    <property type="project" value="TreeGrafter"/>
</dbReference>
<dbReference type="GO" id="GO:0006739">
    <property type="term" value="P:NADP metabolic process"/>
    <property type="evidence" value="ECO:0007669"/>
    <property type="project" value="UniProtKB-UniRule"/>
</dbReference>
<dbReference type="FunFam" id="3.30.390.30:FF:000002">
    <property type="entry name" value="Soluble pyridine nucleotide transhydrogenase"/>
    <property type="match status" value="1"/>
</dbReference>
<dbReference type="FunFam" id="3.50.50.60:FF:000008">
    <property type="entry name" value="Soluble pyridine nucleotide transhydrogenase"/>
    <property type="match status" value="1"/>
</dbReference>
<dbReference type="Gene3D" id="3.30.390.30">
    <property type="match status" value="1"/>
</dbReference>
<dbReference type="Gene3D" id="3.50.50.60">
    <property type="entry name" value="FAD/NAD(P)-binding domain"/>
    <property type="match status" value="2"/>
</dbReference>
<dbReference type="HAMAP" id="MF_00247">
    <property type="entry name" value="SthA"/>
    <property type="match status" value="1"/>
</dbReference>
<dbReference type="InterPro" id="IPR050151">
    <property type="entry name" value="Class-I_Pyr_Nuc-Dis_Oxidored"/>
</dbReference>
<dbReference type="InterPro" id="IPR036188">
    <property type="entry name" value="FAD/NAD-bd_sf"/>
</dbReference>
<dbReference type="InterPro" id="IPR023753">
    <property type="entry name" value="FAD/NAD-binding_dom"/>
</dbReference>
<dbReference type="InterPro" id="IPR016156">
    <property type="entry name" value="FAD/NAD-linked_Rdtase_dimer_sf"/>
</dbReference>
<dbReference type="InterPro" id="IPR001100">
    <property type="entry name" value="Pyr_nuc-diS_OxRdtase"/>
</dbReference>
<dbReference type="InterPro" id="IPR004099">
    <property type="entry name" value="Pyr_nucl-diS_OxRdtase_dimer"/>
</dbReference>
<dbReference type="InterPro" id="IPR022962">
    <property type="entry name" value="STH_gammaproteobact"/>
</dbReference>
<dbReference type="NCBIfam" id="NF003585">
    <property type="entry name" value="PRK05249.1"/>
    <property type="match status" value="1"/>
</dbReference>
<dbReference type="PANTHER" id="PTHR22912">
    <property type="entry name" value="DISULFIDE OXIDOREDUCTASE"/>
    <property type="match status" value="1"/>
</dbReference>
<dbReference type="PANTHER" id="PTHR22912:SF93">
    <property type="entry name" value="SOLUBLE PYRIDINE NUCLEOTIDE TRANSHYDROGENASE"/>
    <property type="match status" value="1"/>
</dbReference>
<dbReference type="Pfam" id="PF07992">
    <property type="entry name" value="Pyr_redox_2"/>
    <property type="match status" value="1"/>
</dbReference>
<dbReference type="Pfam" id="PF02852">
    <property type="entry name" value="Pyr_redox_dim"/>
    <property type="match status" value="1"/>
</dbReference>
<dbReference type="PIRSF" id="PIRSF000350">
    <property type="entry name" value="Mercury_reductase_MerA"/>
    <property type="match status" value="1"/>
</dbReference>
<dbReference type="PRINTS" id="PR00368">
    <property type="entry name" value="FADPNR"/>
</dbReference>
<dbReference type="PRINTS" id="PR00411">
    <property type="entry name" value="PNDRDTASEI"/>
</dbReference>
<dbReference type="SUPFAM" id="SSF51905">
    <property type="entry name" value="FAD/NAD(P)-binding domain"/>
    <property type="match status" value="1"/>
</dbReference>
<dbReference type="SUPFAM" id="SSF55424">
    <property type="entry name" value="FAD/NAD-linked reductases, dimerisation (C-terminal) domain"/>
    <property type="match status" value="1"/>
</dbReference>
<protein>
    <recommendedName>
        <fullName evidence="1">Soluble pyridine nucleotide transhydrogenase</fullName>
        <shortName evidence="1">STH</shortName>
        <ecNumber evidence="1">1.6.1.1</ecNumber>
    </recommendedName>
    <alternativeName>
        <fullName evidence="1">NAD(P)(+) transhydrogenase [B-specific]</fullName>
    </alternativeName>
</protein>
<comment type="function">
    <text evidence="1">Conversion of NADPH, generated by peripheral catabolic pathways, to NADH, which can enter the respiratory chain for energy generation.</text>
</comment>
<comment type="catalytic activity">
    <reaction evidence="1">
        <text>NAD(+) + NADPH = NADH + NADP(+)</text>
        <dbReference type="Rhea" id="RHEA:11692"/>
        <dbReference type="ChEBI" id="CHEBI:57540"/>
        <dbReference type="ChEBI" id="CHEBI:57783"/>
        <dbReference type="ChEBI" id="CHEBI:57945"/>
        <dbReference type="ChEBI" id="CHEBI:58349"/>
        <dbReference type="EC" id="1.6.1.1"/>
    </reaction>
</comment>
<comment type="cofactor">
    <cofactor evidence="1">
        <name>FAD</name>
        <dbReference type="ChEBI" id="CHEBI:57692"/>
    </cofactor>
    <text evidence="1">Binds 1 FAD per subunit.</text>
</comment>
<comment type="subcellular location">
    <subcellularLocation>
        <location evidence="1">Cytoplasm</location>
    </subcellularLocation>
</comment>
<comment type="similarity">
    <text evidence="1">Belongs to the class-I pyridine nucleotide-disulfide oxidoreductase family.</text>
</comment>
<organism>
    <name type="scientific">Vibrio cholerae serotype O1 (strain ATCC 39541 / Classical Ogawa 395 / O395)</name>
    <dbReference type="NCBI Taxonomy" id="345073"/>
    <lineage>
        <taxon>Bacteria</taxon>
        <taxon>Pseudomonadati</taxon>
        <taxon>Pseudomonadota</taxon>
        <taxon>Gammaproteobacteria</taxon>
        <taxon>Vibrionales</taxon>
        <taxon>Vibrionaceae</taxon>
        <taxon>Vibrio</taxon>
    </lineage>
</organism>
<gene>
    <name evidence="1" type="primary">sthA</name>
    <name type="synonym">dude</name>
    <name type="ordered locus">VC0395_A2370</name>
    <name type="ordered locus">VC395_0029</name>
</gene>
<evidence type="ECO:0000255" key="1">
    <source>
        <dbReference type="HAMAP-Rule" id="MF_00247"/>
    </source>
</evidence>
<sequence length="466" mass="50942">MGQKNHFDVIVIGSGPGGEGAAMGLTKGGKNVAIIEKESSVGGGCTHWGTIPSKALRHAVSRIIEFNSNPLFCKNNSSIHATFSTILSHAKSVIDKQTRLRQGFYDRNQCTLIFGAAHFIDAHTVAVKKADGSIDTYSADKFVIATGSRPYHPKDVDFGHPRIYDSDSILNLEHDPRHIIIYGAGVIGCEYASIFRGLDVKTDLINTRDRLLSFLDNEVSDALSYHFWNSGVVIRNDETYDKVEGTSDGVIVHLKSGKKMRADCLLYANGRTGNTDKLNLESVGLQADSRGQLVVNANYQTQVEHIYAVGDVIGYPSLASAAYDQGRFVAQAIIHGQAAHLLTEDIPTGIYTIPEISSVGRTEQELTAAKVPYEVGRASFKHLARAQIAGKDIGSLKILFHRETKEILGIHCFGERAAEIIHIGQAIMEQKGEANTIEYFVNTTFNYPTMAEAFRVAALNGLNRLF</sequence>
<name>STHA_VIBC3</name>
<feature type="chain" id="PRO_1000071844" description="Soluble pyridine nucleotide transhydrogenase">
    <location>
        <begin position="1"/>
        <end position="466"/>
    </location>
</feature>
<feature type="binding site" evidence="1">
    <location>
        <begin position="36"/>
        <end position="45"/>
    </location>
    <ligand>
        <name>FAD</name>
        <dbReference type="ChEBI" id="CHEBI:57692"/>
    </ligand>
</feature>
<keyword id="KW-0963">Cytoplasm</keyword>
<keyword id="KW-0274">FAD</keyword>
<keyword id="KW-0285">Flavoprotein</keyword>
<keyword id="KW-0520">NAD</keyword>
<keyword id="KW-0521">NADP</keyword>
<keyword id="KW-0560">Oxidoreductase</keyword>
<proteinExistence type="inferred from homology"/>